<gene>
    <name evidence="1" type="primary">pdxT</name>
    <name type="ordered locus">PTH_0010</name>
</gene>
<evidence type="ECO:0000255" key="1">
    <source>
        <dbReference type="HAMAP-Rule" id="MF_01615"/>
    </source>
</evidence>
<sequence length="196" mass="21161">MKVGVLALQGAFREHQKVLAACGAESVQVRKPEQLEDISALVIPGGESTTIGKLLLEFNLFEPLVKLGQGGLPVFGTCAGMILLAREIAGSGQPRLGLMDISVERNAFGRQVESFEADLDIPVLGEEPFRAVFIRAPYIIEAGGGVEVLARFGEKIVMARQGRCLAAAFHPELTGDLRIHRYFLEKCVRAGQNCKG</sequence>
<accession>A5D6D2</accession>
<protein>
    <recommendedName>
        <fullName evidence="1">Pyridoxal 5'-phosphate synthase subunit PdxT</fullName>
        <ecNumber evidence="1">4.3.3.6</ecNumber>
    </recommendedName>
    <alternativeName>
        <fullName evidence="1">Pdx2</fullName>
    </alternativeName>
    <alternativeName>
        <fullName evidence="1">Pyridoxal 5'-phosphate synthase glutaminase subunit</fullName>
        <ecNumber evidence="1">3.5.1.2</ecNumber>
    </alternativeName>
</protein>
<feature type="chain" id="PRO_1000088052" description="Pyridoxal 5'-phosphate synthase subunit PdxT">
    <location>
        <begin position="1"/>
        <end position="196"/>
    </location>
</feature>
<feature type="active site" description="Nucleophile" evidence="1">
    <location>
        <position position="78"/>
    </location>
</feature>
<feature type="active site" description="Charge relay system" evidence="1">
    <location>
        <position position="170"/>
    </location>
</feature>
<feature type="active site" description="Charge relay system" evidence="1">
    <location>
        <position position="172"/>
    </location>
</feature>
<feature type="binding site" evidence="1">
    <location>
        <begin position="46"/>
        <end position="48"/>
    </location>
    <ligand>
        <name>L-glutamine</name>
        <dbReference type="ChEBI" id="CHEBI:58359"/>
    </ligand>
</feature>
<feature type="binding site" evidence="1">
    <location>
        <position position="105"/>
    </location>
    <ligand>
        <name>L-glutamine</name>
        <dbReference type="ChEBI" id="CHEBI:58359"/>
    </ligand>
</feature>
<feature type="binding site" evidence="1">
    <location>
        <begin position="134"/>
        <end position="135"/>
    </location>
    <ligand>
        <name>L-glutamine</name>
        <dbReference type="ChEBI" id="CHEBI:58359"/>
    </ligand>
</feature>
<name>PDXT_PELTS</name>
<comment type="function">
    <text evidence="1">Catalyzes the hydrolysis of glutamine to glutamate and ammonia as part of the biosynthesis of pyridoxal 5'-phosphate. The resulting ammonia molecule is channeled to the active site of PdxS.</text>
</comment>
<comment type="catalytic activity">
    <reaction evidence="1">
        <text>aldehydo-D-ribose 5-phosphate + D-glyceraldehyde 3-phosphate + L-glutamine = pyridoxal 5'-phosphate + L-glutamate + phosphate + 3 H2O + H(+)</text>
        <dbReference type="Rhea" id="RHEA:31507"/>
        <dbReference type="ChEBI" id="CHEBI:15377"/>
        <dbReference type="ChEBI" id="CHEBI:15378"/>
        <dbReference type="ChEBI" id="CHEBI:29985"/>
        <dbReference type="ChEBI" id="CHEBI:43474"/>
        <dbReference type="ChEBI" id="CHEBI:58273"/>
        <dbReference type="ChEBI" id="CHEBI:58359"/>
        <dbReference type="ChEBI" id="CHEBI:59776"/>
        <dbReference type="ChEBI" id="CHEBI:597326"/>
        <dbReference type="EC" id="4.3.3.6"/>
    </reaction>
</comment>
<comment type="catalytic activity">
    <reaction evidence="1">
        <text>L-glutamine + H2O = L-glutamate + NH4(+)</text>
        <dbReference type="Rhea" id="RHEA:15889"/>
        <dbReference type="ChEBI" id="CHEBI:15377"/>
        <dbReference type="ChEBI" id="CHEBI:28938"/>
        <dbReference type="ChEBI" id="CHEBI:29985"/>
        <dbReference type="ChEBI" id="CHEBI:58359"/>
        <dbReference type="EC" id="3.5.1.2"/>
    </reaction>
</comment>
<comment type="pathway">
    <text evidence="1">Cofactor biosynthesis; pyridoxal 5'-phosphate biosynthesis.</text>
</comment>
<comment type="subunit">
    <text evidence="1">In the presence of PdxS, forms a dodecamer of heterodimers. Only shows activity in the heterodimer.</text>
</comment>
<comment type="similarity">
    <text evidence="1">Belongs to the glutaminase PdxT/SNO family.</text>
</comment>
<reference key="1">
    <citation type="journal article" date="2008" name="Genome Res.">
        <title>The genome of Pelotomaculum thermopropionicum reveals niche-associated evolution in anaerobic microbiota.</title>
        <authorList>
            <person name="Kosaka T."/>
            <person name="Kato S."/>
            <person name="Shimoyama T."/>
            <person name="Ishii S."/>
            <person name="Abe T."/>
            <person name="Watanabe K."/>
        </authorList>
    </citation>
    <scope>NUCLEOTIDE SEQUENCE [LARGE SCALE GENOMIC DNA]</scope>
    <source>
        <strain>DSM 13744 / JCM 10971 / SI</strain>
    </source>
</reference>
<dbReference type="EC" id="4.3.3.6" evidence="1"/>
<dbReference type="EC" id="3.5.1.2" evidence="1"/>
<dbReference type="EMBL" id="AP009389">
    <property type="protein sequence ID" value="BAF58191.1"/>
    <property type="molecule type" value="Genomic_DNA"/>
</dbReference>
<dbReference type="SMR" id="A5D6D2"/>
<dbReference type="STRING" id="370438.PTH_0010"/>
<dbReference type="MEROPS" id="C26.A32"/>
<dbReference type="KEGG" id="pth:PTH_0010"/>
<dbReference type="eggNOG" id="COG0311">
    <property type="taxonomic scope" value="Bacteria"/>
</dbReference>
<dbReference type="HOGENOM" id="CLU_069674_2_0_9"/>
<dbReference type="UniPathway" id="UPA00245"/>
<dbReference type="Proteomes" id="UP000006556">
    <property type="component" value="Chromosome"/>
</dbReference>
<dbReference type="GO" id="GO:0005829">
    <property type="term" value="C:cytosol"/>
    <property type="evidence" value="ECO:0007669"/>
    <property type="project" value="TreeGrafter"/>
</dbReference>
<dbReference type="GO" id="GO:1903600">
    <property type="term" value="C:glutaminase complex"/>
    <property type="evidence" value="ECO:0007669"/>
    <property type="project" value="TreeGrafter"/>
</dbReference>
<dbReference type="GO" id="GO:0004359">
    <property type="term" value="F:glutaminase activity"/>
    <property type="evidence" value="ECO:0007669"/>
    <property type="project" value="UniProtKB-UniRule"/>
</dbReference>
<dbReference type="GO" id="GO:0036381">
    <property type="term" value="F:pyridoxal 5'-phosphate synthase (glutamine hydrolysing) activity"/>
    <property type="evidence" value="ECO:0007669"/>
    <property type="project" value="UniProtKB-UniRule"/>
</dbReference>
<dbReference type="GO" id="GO:0006543">
    <property type="term" value="P:glutamine catabolic process"/>
    <property type="evidence" value="ECO:0007669"/>
    <property type="project" value="UniProtKB-UniRule"/>
</dbReference>
<dbReference type="GO" id="GO:0042823">
    <property type="term" value="P:pyridoxal phosphate biosynthetic process"/>
    <property type="evidence" value="ECO:0007669"/>
    <property type="project" value="UniProtKB-UniRule"/>
</dbReference>
<dbReference type="GO" id="GO:0008614">
    <property type="term" value="P:pyridoxine metabolic process"/>
    <property type="evidence" value="ECO:0007669"/>
    <property type="project" value="TreeGrafter"/>
</dbReference>
<dbReference type="CDD" id="cd01749">
    <property type="entry name" value="GATase1_PB"/>
    <property type="match status" value="1"/>
</dbReference>
<dbReference type="FunFam" id="3.40.50.880:FF:000010">
    <property type="entry name" value="uncharacterized protein LOC100176842 isoform X2"/>
    <property type="match status" value="1"/>
</dbReference>
<dbReference type="Gene3D" id="3.40.50.880">
    <property type="match status" value="1"/>
</dbReference>
<dbReference type="HAMAP" id="MF_01615">
    <property type="entry name" value="PdxT"/>
    <property type="match status" value="1"/>
</dbReference>
<dbReference type="InterPro" id="IPR029062">
    <property type="entry name" value="Class_I_gatase-like"/>
</dbReference>
<dbReference type="InterPro" id="IPR002161">
    <property type="entry name" value="PdxT/SNO"/>
</dbReference>
<dbReference type="InterPro" id="IPR021196">
    <property type="entry name" value="PdxT/SNO_CS"/>
</dbReference>
<dbReference type="NCBIfam" id="TIGR03800">
    <property type="entry name" value="PLP_synth_Pdx2"/>
    <property type="match status" value="1"/>
</dbReference>
<dbReference type="PANTHER" id="PTHR31559">
    <property type="entry name" value="PYRIDOXAL 5'-PHOSPHATE SYNTHASE SUBUNIT SNO"/>
    <property type="match status" value="1"/>
</dbReference>
<dbReference type="PANTHER" id="PTHR31559:SF0">
    <property type="entry name" value="PYRIDOXAL 5'-PHOSPHATE SYNTHASE SUBUNIT SNO1-RELATED"/>
    <property type="match status" value="1"/>
</dbReference>
<dbReference type="Pfam" id="PF01174">
    <property type="entry name" value="SNO"/>
    <property type="match status" value="1"/>
</dbReference>
<dbReference type="PIRSF" id="PIRSF005639">
    <property type="entry name" value="Glut_amidoT_SNO"/>
    <property type="match status" value="1"/>
</dbReference>
<dbReference type="SUPFAM" id="SSF52317">
    <property type="entry name" value="Class I glutamine amidotransferase-like"/>
    <property type="match status" value="1"/>
</dbReference>
<dbReference type="PROSITE" id="PS01236">
    <property type="entry name" value="PDXT_SNO_1"/>
    <property type="match status" value="1"/>
</dbReference>
<dbReference type="PROSITE" id="PS51130">
    <property type="entry name" value="PDXT_SNO_2"/>
    <property type="match status" value="1"/>
</dbReference>
<keyword id="KW-0315">Glutamine amidotransferase</keyword>
<keyword id="KW-0378">Hydrolase</keyword>
<keyword id="KW-0456">Lyase</keyword>
<keyword id="KW-0663">Pyridoxal phosphate</keyword>
<keyword id="KW-1185">Reference proteome</keyword>
<organism>
    <name type="scientific">Pelotomaculum thermopropionicum (strain DSM 13744 / JCM 10971 / SI)</name>
    <dbReference type="NCBI Taxonomy" id="370438"/>
    <lineage>
        <taxon>Bacteria</taxon>
        <taxon>Bacillati</taxon>
        <taxon>Bacillota</taxon>
        <taxon>Clostridia</taxon>
        <taxon>Eubacteriales</taxon>
        <taxon>Desulfotomaculaceae</taxon>
        <taxon>Pelotomaculum</taxon>
    </lineage>
</organism>
<proteinExistence type="inferred from homology"/>